<dbReference type="EC" id="2.3.2.29" evidence="1"/>
<dbReference type="EMBL" id="CP000394">
    <property type="protein sequence ID" value="ABI61894.1"/>
    <property type="molecule type" value="Genomic_DNA"/>
</dbReference>
<dbReference type="RefSeq" id="WP_011631703.1">
    <property type="nucleotide sequence ID" value="NC_008343.2"/>
</dbReference>
<dbReference type="SMR" id="Q0BTF8"/>
<dbReference type="STRING" id="391165.GbCGDNIH1_0996"/>
<dbReference type="GeneID" id="69745254"/>
<dbReference type="KEGG" id="gbe:GbCGDNIH1_0996"/>
<dbReference type="eggNOG" id="COG2935">
    <property type="taxonomic scope" value="Bacteria"/>
</dbReference>
<dbReference type="HOGENOM" id="CLU_077607_1_0_5"/>
<dbReference type="OrthoDB" id="9782022at2"/>
<dbReference type="Proteomes" id="UP000001963">
    <property type="component" value="Chromosome"/>
</dbReference>
<dbReference type="GO" id="GO:0005737">
    <property type="term" value="C:cytoplasm"/>
    <property type="evidence" value="ECO:0007669"/>
    <property type="project" value="UniProtKB-SubCell"/>
</dbReference>
<dbReference type="GO" id="GO:0004057">
    <property type="term" value="F:arginyl-tRNA--protein transferase activity"/>
    <property type="evidence" value="ECO:0007669"/>
    <property type="project" value="InterPro"/>
</dbReference>
<dbReference type="GO" id="GO:0008914">
    <property type="term" value="F:leucyl-tRNA--protein transferase activity"/>
    <property type="evidence" value="ECO:0007669"/>
    <property type="project" value="UniProtKB-UniRule"/>
</dbReference>
<dbReference type="GO" id="GO:0071596">
    <property type="term" value="P:ubiquitin-dependent protein catabolic process via the N-end rule pathway"/>
    <property type="evidence" value="ECO:0007669"/>
    <property type="project" value="InterPro"/>
</dbReference>
<dbReference type="HAMAP" id="MF_00689">
    <property type="entry name" value="Bpt"/>
    <property type="match status" value="1"/>
</dbReference>
<dbReference type="InterPro" id="IPR016181">
    <property type="entry name" value="Acyl_CoA_acyltransferase"/>
</dbReference>
<dbReference type="InterPro" id="IPR017138">
    <property type="entry name" value="Asp_Glu_LeuTrfase"/>
</dbReference>
<dbReference type="InterPro" id="IPR030700">
    <property type="entry name" value="N-end_Aminoacyl_Trfase"/>
</dbReference>
<dbReference type="InterPro" id="IPR007472">
    <property type="entry name" value="N-end_Aminoacyl_Trfase_C"/>
</dbReference>
<dbReference type="InterPro" id="IPR007471">
    <property type="entry name" value="N-end_Aminoacyl_Trfase_N"/>
</dbReference>
<dbReference type="NCBIfam" id="NF002341">
    <property type="entry name" value="PRK01305.1-1"/>
    <property type="match status" value="1"/>
</dbReference>
<dbReference type="NCBIfam" id="NF002342">
    <property type="entry name" value="PRK01305.1-3"/>
    <property type="match status" value="1"/>
</dbReference>
<dbReference type="NCBIfam" id="NF002343">
    <property type="entry name" value="PRK01305.1-4"/>
    <property type="match status" value="1"/>
</dbReference>
<dbReference type="NCBIfam" id="NF002346">
    <property type="entry name" value="PRK01305.2-3"/>
    <property type="match status" value="1"/>
</dbReference>
<dbReference type="PANTHER" id="PTHR21367">
    <property type="entry name" value="ARGININE-TRNA-PROTEIN TRANSFERASE 1"/>
    <property type="match status" value="1"/>
</dbReference>
<dbReference type="PANTHER" id="PTHR21367:SF1">
    <property type="entry name" value="ARGINYL-TRNA--PROTEIN TRANSFERASE 1"/>
    <property type="match status" value="1"/>
</dbReference>
<dbReference type="Pfam" id="PF04377">
    <property type="entry name" value="ATE_C"/>
    <property type="match status" value="1"/>
</dbReference>
<dbReference type="Pfam" id="PF04376">
    <property type="entry name" value="ATE_N"/>
    <property type="match status" value="1"/>
</dbReference>
<dbReference type="PIRSF" id="PIRSF037208">
    <property type="entry name" value="ATE_pro_prd"/>
    <property type="match status" value="1"/>
</dbReference>
<dbReference type="SUPFAM" id="SSF55729">
    <property type="entry name" value="Acyl-CoA N-acyltransferases (Nat)"/>
    <property type="match status" value="1"/>
</dbReference>
<organism>
    <name type="scientific">Granulibacter bethesdensis (strain ATCC BAA-1260 / CGDNIH1)</name>
    <dbReference type="NCBI Taxonomy" id="391165"/>
    <lineage>
        <taxon>Bacteria</taxon>
        <taxon>Pseudomonadati</taxon>
        <taxon>Pseudomonadota</taxon>
        <taxon>Alphaproteobacteria</taxon>
        <taxon>Acetobacterales</taxon>
        <taxon>Acetobacteraceae</taxon>
        <taxon>Granulibacter</taxon>
    </lineage>
</organism>
<reference key="1">
    <citation type="journal article" date="2007" name="J. Bacteriol.">
        <title>Genome sequence analysis of the emerging human pathogenic acetic acid bacterium Granulibacter bethesdensis.</title>
        <authorList>
            <person name="Greenberg D.E."/>
            <person name="Porcella S.F."/>
            <person name="Zelazny A.M."/>
            <person name="Virtaneva K."/>
            <person name="Sturdevant D.E."/>
            <person name="Kupko J.J. III"/>
            <person name="Barbian K.D."/>
            <person name="Babar A."/>
            <person name="Dorward D.W."/>
            <person name="Holland S.M."/>
        </authorList>
    </citation>
    <scope>NUCLEOTIDE SEQUENCE [LARGE SCALE GENOMIC DNA]</scope>
    <source>
        <strain>ATCC BAA-1260 / CGDNIH1</strain>
    </source>
</reference>
<evidence type="ECO:0000255" key="1">
    <source>
        <dbReference type="HAMAP-Rule" id="MF_00689"/>
    </source>
</evidence>
<evidence type="ECO:0000256" key="2">
    <source>
        <dbReference type="SAM" id="MobiDB-lite"/>
    </source>
</evidence>
<sequence length="267" mass="30330">MNDSKPLYRPQFFYTTGASPCPYLDGRMERKVVTEITGPDAETLHNRLSRAGFRRSHNIAYAPVCQGCNACVPIRIAVNDFRLTRTRRRINRTNAGVEMFDVPAQATHEQFMLFQRYQKSRHGDGDMAAMGFTDYRAMVEDTPIQTSILEFRDQDDVLLCACLTDRLNDGLSAVYSFYDPDLPQRSLGSYAILSMVAQTKAEGLPYLYLGYWVANSRKMAYKSAYQPAEILSRGAWRPLTQADIEEQEEQTRPLFRPSATGFSTGQE</sequence>
<comment type="function">
    <text evidence="1">Functions in the N-end rule pathway of protein degradation where it conjugates Leu from its aminoacyl-tRNA to the N-termini of proteins containing an N-terminal aspartate or glutamate.</text>
</comment>
<comment type="catalytic activity">
    <reaction evidence="1">
        <text>N-terminal L-glutamyl-[protein] + L-leucyl-tRNA(Leu) = N-terminal L-leucyl-L-glutamyl-[protein] + tRNA(Leu) + H(+)</text>
        <dbReference type="Rhea" id="RHEA:50412"/>
        <dbReference type="Rhea" id="RHEA-COMP:9613"/>
        <dbReference type="Rhea" id="RHEA-COMP:9622"/>
        <dbReference type="Rhea" id="RHEA-COMP:12664"/>
        <dbReference type="Rhea" id="RHEA-COMP:12668"/>
        <dbReference type="ChEBI" id="CHEBI:15378"/>
        <dbReference type="ChEBI" id="CHEBI:64721"/>
        <dbReference type="ChEBI" id="CHEBI:78442"/>
        <dbReference type="ChEBI" id="CHEBI:78494"/>
        <dbReference type="ChEBI" id="CHEBI:133041"/>
        <dbReference type="EC" id="2.3.2.29"/>
    </reaction>
</comment>
<comment type="catalytic activity">
    <reaction evidence="1">
        <text>N-terminal L-aspartyl-[protein] + L-leucyl-tRNA(Leu) = N-terminal L-leucyl-L-aspartyl-[protein] + tRNA(Leu) + H(+)</text>
        <dbReference type="Rhea" id="RHEA:50420"/>
        <dbReference type="Rhea" id="RHEA-COMP:9613"/>
        <dbReference type="Rhea" id="RHEA-COMP:9622"/>
        <dbReference type="Rhea" id="RHEA-COMP:12669"/>
        <dbReference type="Rhea" id="RHEA-COMP:12674"/>
        <dbReference type="ChEBI" id="CHEBI:15378"/>
        <dbReference type="ChEBI" id="CHEBI:64720"/>
        <dbReference type="ChEBI" id="CHEBI:78442"/>
        <dbReference type="ChEBI" id="CHEBI:78494"/>
        <dbReference type="ChEBI" id="CHEBI:133042"/>
        <dbReference type="EC" id="2.3.2.29"/>
    </reaction>
</comment>
<comment type="subcellular location">
    <subcellularLocation>
        <location evidence="1">Cytoplasm</location>
    </subcellularLocation>
</comment>
<comment type="similarity">
    <text evidence="1">Belongs to the R-transferase family. Bpt subfamily.</text>
</comment>
<keyword id="KW-0012">Acyltransferase</keyword>
<keyword id="KW-0963">Cytoplasm</keyword>
<keyword id="KW-1185">Reference proteome</keyword>
<keyword id="KW-0808">Transferase</keyword>
<gene>
    <name evidence="1" type="primary">bpt</name>
    <name type="ordered locus">GbCGDNIH1_0996</name>
</gene>
<accession>Q0BTF8</accession>
<protein>
    <recommendedName>
        <fullName evidence="1">Aspartate/glutamate leucyltransferase</fullName>
        <ecNumber evidence="1">2.3.2.29</ecNumber>
    </recommendedName>
</protein>
<feature type="chain" id="PRO_0000263186" description="Aspartate/glutamate leucyltransferase">
    <location>
        <begin position="1"/>
        <end position="267"/>
    </location>
</feature>
<feature type="region of interest" description="Disordered" evidence="2">
    <location>
        <begin position="246"/>
        <end position="267"/>
    </location>
</feature>
<name>BPT_GRABC</name>
<proteinExistence type="inferred from homology"/>